<comment type="function">
    <text evidence="1">Involved in pyrimidine catabolism. May facilitate the hydrolysis of carbamate, a reaction that can also occur spontaneously.</text>
</comment>
<comment type="catalytic activity">
    <reaction evidence="1">
        <text>carbamate + 2 H(+) = NH4(+) + CO2</text>
        <dbReference type="Rhea" id="RHEA:15649"/>
        <dbReference type="ChEBI" id="CHEBI:13941"/>
        <dbReference type="ChEBI" id="CHEBI:15378"/>
        <dbReference type="ChEBI" id="CHEBI:16526"/>
        <dbReference type="ChEBI" id="CHEBI:28938"/>
    </reaction>
</comment>
<comment type="similarity">
    <text evidence="1">Belongs to the AB hydrolase superfamily. Hydrolase RutD family.</text>
</comment>
<evidence type="ECO:0000255" key="1">
    <source>
        <dbReference type="HAMAP-Rule" id="MF_00832"/>
    </source>
</evidence>
<dbReference type="EC" id="3.5.1.-" evidence="1"/>
<dbReference type="EMBL" id="CP001875">
    <property type="protein sequence ID" value="ADD79203.1"/>
    <property type="molecule type" value="Genomic_DNA"/>
</dbReference>
<dbReference type="RefSeq" id="WP_013027869.1">
    <property type="nucleotide sequence ID" value="NC_013956.2"/>
</dbReference>
<dbReference type="SMR" id="D4GEU7"/>
<dbReference type="STRING" id="706191.PANA_4036"/>
<dbReference type="ESTHER" id="panam-rutd">
    <property type="family name" value="RutD"/>
</dbReference>
<dbReference type="KEGG" id="pam:PANA_4036"/>
<dbReference type="eggNOG" id="COG2267">
    <property type="taxonomic scope" value="Bacteria"/>
</dbReference>
<dbReference type="HOGENOM" id="CLU_020336_50_1_6"/>
<dbReference type="Proteomes" id="UP000001702">
    <property type="component" value="Chromosome"/>
</dbReference>
<dbReference type="GO" id="GO:0016811">
    <property type="term" value="F:hydrolase activity, acting on carbon-nitrogen (but not peptide) bonds, in linear amides"/>
    <property type="evidence" value="ECO:0007669"/>
    <property type="project" value="InterPro"/>
</dbReference>
<dbReference type="GO" id="GO:0019740">
    <property type="term" value="P:nitrogen utilization"/>
    <property type="evidence" value="ECO:0007669"/>
    <property type="project" value="UniProtKB-UniRule"/>
</dbReference>
<dbReference type="GO" id="GO:0006212">
    <property type="term" value="P:uracil catabolic process"/>
    <property type="evidence" value="ECO:0007669"/>
    <property type="project" value="UniProtKB-UniRule"/>
</dbReference>
<dbReference type="Gene3D" id="3.40.50.1820">
    <property type="entry name" value="alpha/beta hydrolase"/>
    <property type="match status" value="1"/>
</dbReference>
<dbReference type="HAMAP" id="MF_00832">
    <property type="entry name" value="RutD"/>
    <property type="match status" value="1"/>
</dbReference>
<dbReference type="InterPro" id="IPR050471">
    <property type="entry name" value="AB_hydrolase"/>
</dbReference>
<dbReference type="InterPro" id="IPR000073">
    <property type="entry name" value="AB_hydrolase_1"/>
</dbReference>
<dbReference type="InterPro" id="IPR029058">
    <property type="entry name" value="AB_hydrolase_fold"/>
</dbReference>
<dbReference type="InterPro" id="IPR019913">
    <property type="entry name" value="Pyrimidine_utilisation_RutD"/>
</dbReference>
<dbReference type="NCBIfam" id="TIGR03611">
    <property type="entry name" value="RutD"/>
    <property type="match status" value="1"/>
</dbReference>
<dbReference type="PANTHER" id="PTHR43433:SF10">
    <property type="entry name" value="AB HYDROLASE-1 DOMAIN-CONTAINING PROTEIN"/>
    <property type="match status" value="1"/>
</dbReference>
<dbReference type="PANTHER" id="PTHR43433">
    <property type="entry name" value="HYDROLASE, ALPHA/BETA FOLD FAMILY PROTEIN"/>
    <property type="match status" value="1"/>
</dbReference>
<dbReference type="Pfam" id="PF00561">
    <property type="entry name" value="Abhydrolase_1"/>
    <property type="match status" value="1"/>
</dbReference>
<dbReference type="PRINTS" id="PR00111">
    <property type="entry name" value="ABHYDROLASE"/>
</dbReference>
<dbReference type="SUPFAM" id="SSF53474">
    <property type="entry name" value="alpha/beta-Hydrolases"/>
    <property type="match status" value="1"/>
</dbReference>
<name>RUTD_PANAM</name>
<organism>
    <name type="scientific">Pantoea ananatis (strain LMG 20103)</name>
    <dbReference type="NCBI Taxonomy" id="706191"/>
    <lineage>
        <taxon>Bacteria</taxon>
        <taxon>Pseudomonadati</taxon>
        <taxon>Pseudomonadota</taxon>
        <taxon>Gammaproteobacteria</taxon>
        <taxon>Enterobacterales</taxon>
        <taxon>Erwiniaceae</taxon>
        <taxon>Pantoea</taxon>
    </lineage>
</organism>
<protein>
    <recommendedName>
        <fullName evidence="1">Putative carbamate hydrolase RutD</fullName>
        <ecNumber evidence="1">3.5.1.-</ecNumber>
    </recommendedName>
    <alternativeName>
        <fullName evidence="1">Aminohydrolase</fullName>
    </alternativeName>
</protein>
<sequence length="275" mass="30097">MYYKVLGQQNADAETVVLSSGLGGSGGFWQPQLAMLSAHFRVVVYDQYGTGASQGSVPAGYRMEDMADELAGLLNALNISRCHLVGHALGGIMGLHLALRYPALLQSLVVINGWTVLNSQTRRCFDVRRNLLLNSGVDAYVQAQPLFLYPGDWLSEHEAFLQEERQHQVANFQGMENLLHRLQALMDSDLTTSLKGVIAPTLALSAKDDLLVPWSCSADLASRLPHGEHLQMGYGGHAMSVTDPDTFNPILLDWLQRQASHPSGTPSDFIPVEMP</sequence>
<feature type="chain" id="PRO_0000402976" description="Putative carbamate hydrolase RutD">
    <location>
        <begin position="1"/>
        <end position="275"/>
    </location>
</feature>
<feature type="domain" description="AB hydrolase-1" evidence="1">
    <location>
        <begin position="15"/>
        <end position="116"/>
    </location>
</feature>
<proteinExistence type="inferred from homology"/>
<gene>
    <name evidence="1" type="primary">rutD</name>
    <name type="ordered locus">PANA_4036</name>
</gene>
<accession>D4GEU7</accession>
<keyword id="KW-0378">Hydrolase</keyword>
<keyword id="KW-1185">Reference proteome</keyword>
<reference key="1">
    <citation type="journal article" date="2010" name="J. Bacteriol.">
        <title>Genome sequence of Pantoea ananatis LMG20103, the causative agent of Eucalyptus blight and dieback.</title>
        <authorList>
            <person name="De Maayer P."/>
            <person name="Chan W.Y."/>
            <person name="Venter S.N."/>
            <person name="Toth I.K."/>
            <person name="Birch P.R."/>
            <person name="Joubert F."/>
            <person name="Coutinho T.A."/>
        </authorList>
    </citation>
    <scope>NUCLEOTIDE SEQUENCE [LARGE SCALE GENOMIC DNA]</scope>
    <source>
        <strain>LMG 20103</strain>
    </source>
</reference>